<organism>
    <name type="scientific">Thermus thermophilus (strain ATCC 27634 / DSM 579 / HB8)</name>
    <dbReference type="NCBI Taxonomy" id="300852"/>
    <lineage>
        <taxon>Bacteria</taxon>
        <taxon>Thermotogati</taxon>
        <taxon>Deinococcota</taxon>
        <taxon>Deinococci</taxon>
        <taxon>Thermales</taxon>
        <taxon>Thermaceae</taxon>
        <taxon>Thermus</taxon>
    </lineage>
</organism>
<comment type="subunit">
    <text>Part of the 50S ribosomal subunit.</text>
</comment>
<comment type="mass spectrometry"/>
<comment type="similarity">
    <text evidence="4">Belongs to the bacterial ribosomal protein bL35 family.</text>
</comment>
<evidence type="ECO:0000269" key="1">
    <source>
    </source>
</evidence>
<evidence type="ECO:0000269" key="2">
    <source>
    </source>
</evidence>
<evidence type="ECO:0000269" key="3">
    <source ref="2"/>
</evidence>
<evidence type="ECO:0000305" key="4"/>
<evidence type="ECO:0007829" key="5">
    <source>
        <dbReference type="PDB" id="4WT8"/>
    </source>
</evidence>
<keyword id="KW-0002">3D-structure</keyword>
<keyword id="KW-0903">Direct protein sequencing</keyword>
<keyword id="KW-1185">Reference proteome</keyword>
<keyword id="KW-0687">Ribonucleoprotein</keyword>
<keyword id="KW-0689">Ribosomal protein</keyword>
<feature type="initiator methionine" description="Removed" evidence="1 3">
    <location>
        <position position="1"/>
    </location>
</feature>
<feature type="chain" id="PRO_0000177443" description="Large ribosomal subunit protein bL35">
    <location>
        <begin position="2"/>
        <end position="65"/>
    </location>
</feature>
<feature type="sequence conflict" description="In Ref. 2; AA sequence." evidence="4" ref="2">
    <original>E</original>
    <variation>ER</variation>
    <location>
        <position position="65"/>
    </location>
</feature>
<feature type="helix" evidence="5">
    <location>
        <begin position="8"/>
        <end position="11"/>
    </location>
</feature>
<feature type="strand" evidence="5">
    <location>
        <begin position="22"/>
        <end position="25"/>
    </location>
</feature>
<feature type="strand" evidence="5">
    <location>
        <begin position="30"/>
        <end position="32"/>
    </location>
</feature>
<feature type="strand" evidence="5">
    <location>
        <begin position="34"/>
        <end position="36"/>
    </location>
</feature>
<feature type="helix" evidence="5">
    <location>
        <begin position="38"/>
        <end position="42"/>
    </location>
</feature>
<feature type="strand" evidence="5">
    <location>
        <begin position="45"/>
        <end position="47"/>
    </location>
</feature>
<feature type="helix" evidence="5">
    <location>
        <begin position="52"/>
        <end position="58"/>
    </location>
</feature>
<feature type="turn" evidence="5">
    <location>
        <begin position="61"/>
        <end position="63"/>
    </location>
</feature>
<accession>Q5SKU1</accession>
<name>RL35_THET8</name>
<reference key="1">
    <citation type="submission" date="2004-11" db="EMBL/GenBank/DDBJ databases">
        <title>Complete genome sequence of Thermus thermophilus HB8.</title>
        <authorList>
            <person name="Masui R."/>
            <person name="Kurokawa K."/>
            <person name="Nakagawa N."/>
            <person name="Tokunaga F."/>
            <person name="Koyama Y."/>
            <person name="Shibata T."/>
            <person name="Oshima T."/>
            <person name="Yokoyama S."/>
            <person name="Yasunaga T."/>
            <person name="Kuramitsu S."/>
        </authorList>
    </citation>
    <scope>NUCLEOTIDE SEQUENCE [LARGE SCALE GENOMIC DNA]</scope>
    <source>
        <strain>ATCC 27634 / DSM 579 / HB8</strain>
    </source>
</reference>
<reference key="2">
    <citation type="journal article" date="1995" name="Endocyt. Cell Res.">
        <title>The isolation and complete amino acid sequence of the ribosomal protein L36 from Thermus thermophilus and its zinc-binding motif.</title>
        <authorList>
            <person name="Boysen R.I."/>
            <person name="Lorenz S."/>
            <person name="Kim J.S."/>
            <person name="Schroeder W.F.K.J."/>
            <person name="Erdmann V.A."/>
        </authorList>
    </citation>
    <scope>PROTEIN SEQUENCE OF 2-65</scope>
</reference>
<reference key="3">
    <citation type="journal article" date="2000" name="Biol. Chem.">
        <title>Identification of the 50S ribosomal proteins from the eubacterium Thermus thermophilus.</title>
        <authorList>
            <person name="Katsani K.R."/>
            <person name="Tsiboli P."/>
            <person name="Anagnostopoulos K."/>
            <person name="Urlaub H."/>
            <person name="Choli-Papadopoulou T."/>
        </authorList>
    </citation>
    <scope>PROTEIN SEQUENCE OF 2-25</scope>
    <source>
        <strain>ATCC 27634 / DSM 579 / HB8</strain>
    </source>
</reference>
<reference key="4">
    <citation type="journal article" date="2005" name="Proteomics">
        <title>Extending ribosomal protein identifications to unsequenced bacterial strains using matrix-assisted laser desorption/ionization mass spectrometry.</title>
        <authorList>
            <person name="Suh M.-J."/>
            <person name="Hamburg D.M."/>
            <person name="Gregory S.T."/>
            <person name="Dahlberg A.E."/>
            <person name="Limbach P.A."/>
        </authorList>
    </citation>
    <scope>MASS SPECTROMETRY</scope>
    <source>
        <strain>ATCC 27634 / DSM 579 / HB8</strain>
    </source>
</reference>
<reference key="5">
    <citation type="journal article" date="2008" name="Science">
        <title>Insights into translational termination from the structure of RF2 bound to the ribosome.</title>
        <authorList>
            <person name="Weixlbaumer A."/>
            <person name="Jin H."/>
            <person name="Neubauer C."/>
            <person name="Voorhees R.M."/>
            <person name="Petry S."/>
            <person name="Kelley A.C."/>
            <person name="Ramakrishnan V."/>
        </authorList>
    </citation>
    <scope>X-RAY CRYSTALLOGRAPHY (3.45 ANGSTROMS) OF 70S RIBOSOME IN COMPLEX WITH RF2</scope>
    <scope>SUBUNIT</scope>
</reference>
<reference key="6">
    <citation type="journal article" date="2010" name="Proc. Natl. Acad. Sci. U.S.A.">
        <title>Structure of the 70S ribosome bound to release factor 2 and a substrate analog provides insights into catalysis of peptide release.</title>
        <authorList>
            <person name="Jin H."/>
            <person name="Kelley A.C."/>
            <person name="Loakes D."/>
            <person name="Ramakrishnan V."/>
        </authorList>
    </citation>
    <scope>X-RAY CRYSTALLOGRAPHY (3.10 ANGSTROMS) OF 70S RIBOSOME IN COMPLEX WITH RF2</scope>
    <scope>SUBUNIT</scope>
</reference>
<gene>
    <name type="primary">rpmI</name>
    <name type="ordered locus">TTHA0552</name>
</gene>
<sequence>MPKMKTHKGAKKRVKITASGKVVAMKTGKRHLNWQKSGKEIRQKGRKFVLAKPEAERIKLLLPYE</sequence>
<proteinExistence type="evidence at protein level"/>
<protein>
    <recommendedName>
        <fullName evidence="4">Large ribosomal subunit protein bL35</fullName>
    </recommendedName>
    <alternativeName>
        <fullName>50S ribosomal protein L35</fullName>
    </alternativeName>
</protein>
<dbReference type="EMBL" id="AP008226">
    <property type="protein sequence ID" value="BAD70375.1"/>
    <property type="molecule type" value="Genomic_DNA"/>
</dbReference>
<dbReference type="RefSeq" id="WP_011172638.1">
    <property type="nucleotide sequence ID" value="NC_006461.1"/>
</dbReference>
<dbReference type="RefSeq" id="YP_143818.1">
    <property type="nucleotide sequence ID" value="NC_006461.1"/>
</dbReference>
<dbReference type="PDB" id="1VVJ">
    <property type="method" value="X-ray"/>
    <property type="resolution" value="3.44 A"/>
    <property type="chains" value="R8/Y8=1-65"/>
</dbReference>
<dbReference type="PDB" id="1VY4">
    <property type="method" value="X-ray"/>
    <property type="resolution" value="2.60 A"/>
    <property type="chains" value="B8/D8=1-65"/>
</dbReference>
<dbReference type="PDB" id="1VY5">
    <property type="method" value="X-ray"/>
    <property type="resolution" value="2.55 A"/>
    <property type="chains" value="B8/D8=1-65"/>
</dbReference>
<dbReference type="PDB" id="1VY6">
    <property type="method" value="X-ray"/>
    <property type="resolution" value="2.90 A"/>
    <property type="chains" value="B8/D8=1-65"/>
</dbReference>
<dbReference type="PDB" id="1VY7">
    <property type="method" value="X-ray"/>
    <property type="resolution" value="2.80 A"/>
    <property type="chains" value="B8/D8=1-65"/>
</dbReference>
<dbReference type="PDB" id="4L47">
    <property type="method" value="X-ray"/>
    <property type="resolution" value="3.22 A"/>
    <property type="chains" value="R8/Y8=1-65"/>
</dbReference>
<dbReference type="PDB" id="4L71">
    <property type="method" value="X-ray"/>
    <property type="resolution" value="3.90 A"/>
    <property type="chains" value="R8/Y8=1-65"/>
</dbReference>
<dbReference type="PDB" id="4LEL">
    <property type="method" value="X-ray"/>
    <property type="resolution" value="3.90 A"/>
    <property type="chains" value="R8/Y8=1-65"/>
</dbReference>
<dbReference type="PDB" id="4LFZ">
    <property type="method" value="X-ray"/>
    <property type="resolution" value="3.92 A"/>
    <property type="chains" value="R8/Y8=1-65"/>
</dbReference>
<dbReference type="PDB" id="4LNT">
    <property type="method" value="X-ray"/>
    <property type="resolution" value="2.94 A"/>
    <property type="chains" value="R8/Y8=1-65"/>
</dbReference>
<dbReference type="PDB" id="4LSK">
    <property type="method" value="X-ray"/>
    <property type="resolution" value="3.48 A"/>
    <property type="chains" value="R8/Y8=1-65"/>
</dbReference>
<dbReference type="PDB" id="4LT8">
    <property type="method" value="X-ray"/>
    <property type="resolution" value="3.14 A"/>
    <property type="chains" value="R8/Y8=1-65"/>
</dbReference>
<dbReference type="PDB" id="4P6F">
    <property type="method" value="X-ray"/>
    <property type="resolution" value="3.60 A"/>
    <property type="chains" value="R8/Y8=1-65"/>
</dbReference>
<dbReference type="PDB" id="4P70">
    <property type="method" value="X-ray"/>
    <property type="resolution" value="3.68 A"/>
    <property type="chains" value="R8/Y8=1-65"/>
</dbReference>
<dbReference type="PDB" id="4TUA">
    <property type="method" value="X-ray"/>
    <property type="resolution" value="3.60 A"/>
    <property type="chains" value="R8/Y8=1-65"/>
</dbReference>
<dbReference type="PDB" id="4TUB">
    <property type="method" value="X-ray"/>
    <property type="resolution" value="3.60 A"/>
    <property type="chains" value="R8/Y8=1-65"/>
</dbReference>
<dbReference type="PDB" id="4TUC">
    <property type="method" value="X-ray"/>
    <property type="resolution" value="3.60 A"/>
    <property type="chains" value="R8/Y8=1-65"/>
</dbReference>
<dbReference type="PDB" id="4TUD">
    <property type="method" value="X-ray"/>
    <property type="resolution" value="3.60 A"/>
    <property type="chains" value="R8/Y8=1-65"/>
</dbReference>
<dbReference type="PDB" id="4TUE">
    <property type="method" value="X-ray"/>
    <property type="resolution" value="3.50 A"/>
    <property type="chains" value="R8/Y8=1-65"/>
</dbReference>
<dbReference type="PDB" id="4V4P">
    <property type="method" value="X-ray"/>
    <property type="resolution" value="5.50 A"/>
    <property type="chains" value="8=1-63"/>
</dbReference>
<dbReference type="PDB" id="4V4X">
    <property type="method" value="X-ray"/>
    <property type="resolution" value="5.00 A"/>
    <property type="chains" value="B7=1-65"/>
</dbReference>
<dbReference type="PDB" id="4V4Y">
    <property type="method" value="X-ray"/>
    <property type="resolution" value="5.50 A"/>
    <property type="chains" value="B7=1-65"/>
</dbReference>
<dbReference type="PDB" id="4V4Z">
    <property type="method" value="X-ray"/>
    <property type="resolution" value="4.51 A"/>
    <property type="chains" value="B7=1-65"/>
</dbReference>
<dbReference type="PDB" id="4V51">
    <property type="method" value="X-ray"/>
    <property type="resolution" value="2.80 A"/>
    <property type="chains" value="B8/D8=2-65"/>
</dbReference>
<dbReference type="PDB" id="4V5C">
    <property type="method" value="X-ray"/>
    <property type="resolution" value="3.30 A"/>
    <property type="chains" value="B8/D8=1-65"/>
</dbReference>
<dbReference type="PDB" id="4V5D">
    <property type="method" value="X-ray"/>
    <property type="resolution" value="3.50 A"/>
    <property type="chains" value="B8/D8=1-65"/>
</dbReference>
<dbReference type="PDB" id="4V5E">
    <property type="method" value="X-ray"/>
    <property type="resolution" value="3.45 A"/>
    <property type="chains" value="B8/D8=1-65"/>
</dbReference>
<dbReference type="PDB" id="4V5F">
    <property type="method" value="X-ray"/>
    <property type="resolution" value="3.60 A"/>
    <property type="chains" value="B8/D8=1-65"/>
</dbReference>
<dbReference type="PDB" id="4V5G">
    <property type="method" value="X-ray"/>
    <property type="resolution" value="3.60 A"/>
    <property type="chains" value="B8/D8=1-65"/>
</dbReference>
<dbReference type="PDB" id="4V5J">
    <property type="method" value="X-ray"/>
    <property type="resolution" value="3.10 A"/>
    <property type="chains" value="B8/D8=1-65"/>
</dbReference>
<dbReference type="PDB" id="4V5K">
    <property type="method" value="X-ray"/>
    <property type="resolution" value="3.20 A"/>
    <property type="chains" value="B8/D8=1-65"/>
</dbReference>
<dbReference type="PDB" id="4V5L">
    <property type="method" value="X-ray"/>
    <property type="resolution" value="3.10 A"/>
    <property type="chains" value="B8=1-65"/>
</dbReference>
<dbReference type="PDB" id="4V5M">
    <property type="method" value="EM"/>
    <property type="resolution" value="7.80 A"/>
    <property type="chains" value="B8=1-65"/>
</dbReference>
<dbReference type="PDB" id="4V5N">
    <property type="method" value="EM"/>
    <property type="resolution" value="7.60 A"/>
    <property type="chains" value="B8=1-65"/>
</dbReference>
<dbReference type="PDB" id="4V5P">
    <property type="method" value="X-ray"/>
    <property type="resolution" value="3.10 A"/>
    <property type="chains" value="B8/D8=1-65"/>
</dbReference>
<dbReference type="PDB" id="4V5Q">
    <property type="method" value="X-ray"/>
    <property type="resolution" value="3.10 A"/>
    <property type="chains" value="B8/D8=1-65"/>
</dbReference>
<dbReference type="PDB" id="4V5R">
    <property type="method" value="X-ray"/>
    <property type="resolution" value="3.10 A"/>
    <property type="chains" value="B8/D8=1-65"/>
</dbReference>
<dbReference type="PDB" id="4V5S">
    <property type="method" value="X-ray"/>
    <property type="resolution" value="3.10 A"/>
    <property type="chains" value="B8/D8=1-65"/>
</dbReference>
<dbReference type="PDB" id="4V68">
    <property type="method" value="EM"/>
    <property type="resolution" value="6.40 A"/>
    <property type="chains" value="B8=2-65"/>
</dbReference>
<dbReference type="PDB" id="4V6A">
    <property type="method" value="X-ray"/>
    <property type="resolution" value="3.10 A"/>
    <property type="chains" value="B8/D8=1-65"/>
</dbReference>
<dbReference type="PDB" id="4V6F">
    <property type="method" value="X-ray"/>
    <property type="resolution" value="3.10 A"/>
    <property type="chains" value="A8/D8=1-65"/>
</dbReference>
<dbReference type="PDB" id="4V6G">
    <property type="method" value="X-ray"/>
    <property type="resolution" value="3.50 A"/>
    <property type="chains" value="B8/D8=1-65"/>
</dbReference>
<dbReference type="PDB" id="4V7J">
    <property type="method" value="X-ray"/>
    <property type="resolution" value="3.30 A"/>
    <property type="chains" value="A8/B8=1-65"/>
</dbReference>
<dbReference type="PDB" id="4V7K">
    <property type="method" value="X-ray"/>
    <property type="resolution" value="3.60 A"/>
    <property type="chains" value="A8/B8=1-65"/>
</dbReference>
<dbReference type="PDB" id="4V7L">
    <property type="method" value="X-ray"/>
    <property type="resolution" value="3.00 A"/>
    <property type="chains" value="B8/D8=1-65"/>
</dbReference>
<dbReference type="PDB" id="4V7M">
    <property type="method" value="X-ray"/>
    <property type="resolution" value="3.45 A"/>
    <property type="chains" value="B8/D8=1-65"/>
</dbReference>
<dbReference type="PDB" id="4V7W">
    <property type="method" value="X-ray"/>
    <property type="resolution" value="3.00 A"/>
    <property type="chains" value="B8/D8=1-65"/>
</dbReference>
<dbReference type="PDB" id="4V7X">
    <property type="method" value="X-ray"/>
    <property type="resolution" value="3.00 A"/>
    <property type="chains" value="B8/D8=1-65"/>
</dbReference>
<dbReference type="PDB" id="4V7Y">
    <property type="method" value="X-ray"/>
    <property type="resolution" value="3.00 A"/>
    <property type="chains" value="B8/D8=1-65"/>
</dbReference>
<dbReference type="PDB" id="4V7Z">
    <property type="method" value="X-ray"/>
    <property type="resolution" value="3.10 A"/>
    <property type="chains" value="B8/D8=1-65"/>
</dbReference>
<dbReference type="PDB" id="4V87">
    <property type="method" value="X-ray"/>
    <property type="resolution" value="3.10 A"/>
    <property type="chains" value="A8/D8=2-62"/>
</dbReference>
<dbReference type="PDB" id="4V8A">
    <property type="method" value="X-ray"/>
    <property type="resolution" value="3.20 A"/>
    <property type="chains" value="A8/B8=1-65"/>
</dbReference>
<dbReference type="PDB" id="4V8B">
    <property type="method" value="X-ray"/>
    <property type="resolution" value="3.00 A"/>
    <property type="chains" value="B8/D8=1-65"/>
</dbReference>
<dbReference type="PDB" id="4V8C">
    <property type="method" value="X-ray"/>
    <property type="resolution" value="3.30 A"/>
    <property type="chains" value="A8/B8=1-65"/>
</dbReference>
<dbReference type="PDB" id="4V8D">
    <property type="method" value="X-ray"/>
    <property type="resolution" value="3.00 A"/>
    <property type="chains" value="B8/D8=1-65"/>
</dbReference>
<dbReference type="PDB" id="4V8E">
    <property type="method" value="X-ray"/>
    <property type="resolution" value="3.30 A"/>
    <property type="chains" value="A8/C8=1-65"/>
</dbReference>
<dbReference type="PDB" id="4V8F">
    <property type="method" value="X-ray"/>
    <property type="resolution" value="3.30 A"/>
    <property type="chains" value="A8/D8=1-65"/>
</dbReference>
<dbReference type="PDB" id="4V8G">
    <property type="method" value="X-ray"/>
    <property type="resolution" value="3.00 A"/>
    <property type="chains" value="B8/D8=1-65"/>
</dbReference>
<dbReference type="PDB" id="4V8H">
    <property type="method" value="X-ray"/>
    <property type="resolution" value="3.10 A"/>
    <property type="chains" value="B8/D8=1-65"/>
</dbReference>
<dbReference type="PDB" id="4V8I">
    <property type="method" value="X-ray"/>
    <property type="resolution" value="2.70 A"/>
    <property type="chains" value="B8/D8=1-65"/>
</dbReference>
<dbReference type="PDB" id="4V8J">
    <property type="method" value="X-ray"/>
    <property type="resolution" value="3.90 A"/>
    <property type="chains" value="B8/D8=1-65"/>
</dbReference>
<dbReference type="PDB" id="4V8N">
    <property type="method" value="X-ray"/>
    <property type="resolution" value="3.10 A"/>
    <property type="chains" value="B8/D8=1-65"/>
</dbReference>
<dbReference type="PDB" id="4V8O">
    <property type="method" value="X-ray"/>
    <property type="resolution" value="3.80 A"/>
    <property type="chains" value="B8=1-65"/>
</dbReference>
<dbReference type="PDB" id="4V8Q">
    <property type="method" value="X-ray"/>
    <property type="resolution" value="3.10 A"/>
    <property type="chains" value="A8=1-65"/>
</dbReference>
<dbReference type="PDB" id="4V8U">
    <property type="method" value="X-ray"/>
    <property type="resolution" value="3.70 A"/>
    <property type="chains" value="B8/D8=1-65"/>
</dbReference>
<dbReference type="PDB" id="4V8X">
    <property type="method" value="X-ray"/>
    <property type="resolution" value="3.35 A"/>
    <property type="chains" value="B8/D8=1-65"/>
</dbReference>
<dbReference type="PDB" id="4V90">
    <property type="method" value="X-ray"/>
    <property type="resolution" value="2.95 A"/>
    <property type="chains" value="B8=2-65"/>
</dbReference>
<dbReference type="PDB" id="4V95">
    <property type="method" value="X-ray"/>
    <property type="resolution" value="3.20 A"/>
    <property type="chains" value="B8/D8=1-65"/>
</dbReference>
<dbReference type="PDB" id="4V97">
    <property type="method" value="X-ray"/>
    <property type="resolution" value="3.52 A"/>
    <property type="chains" value="B8/D8=1-65"/>
</dbReference>
<dbReference type="PDB" id="4V9A">
    <property type="method" value="X-ray"/>
    <property type="resolution" value="3.30 A"/>
    <property type="chains" value="B8/D8=1-65"/>
</dbReference>
<dbReference type="PDB" id="4V9B">
    <property type="method" value="X-ray"/>
    <property type="resolution" value="3.10 A"/>
    <property type="chains" value="B8/D8=1-65"/>
</dbReference>
<dbReference type="PDB" id="4V9H">
    <property type="method" value="X-ray"/>
    <property type="resolution" value="2.86 A"/>
    <property type="chains" value="B8=1-65"/>
</dbReference>
<dbReference type="PDB" id="4V9I">
    <property type="method" value="X-ray"/>
    <property type="resolution" value="3.30 A"/>
    <property type="chains" value="B8/D8=2-64"/>
</dbReference>
<dbReference type="PDB" id="4V9R">
    <property type="method" value="X-ray"/>
    <property type="resolution" value="3.00 A"/>
    <property type="chains" value="B8/D8=1-65"/>
</dbReference>
<dbReference type="PDB" id="4V9S">
    <property type="method" value="X-ray"/>
    <property type="resolution" value="3.10 A"/>
    <property type="chains" value="B8/D8=1-65"/>
</dbReference>
<dbReference type="PDB" id="4W2E">
    <property type="method" value="X-ray"/>
    <property type="resolution" value="2.90 A"/>
    <property type="chains" value="8=1-65"/>
</dbReference>
<dbReference type="PDB" id="4W2F">
    <property type="method" value="X-ray"/>
    <property type="resolution" value="2.40 A"/>
    <property type="chains" value="B8/D8=1-65"/>
</dbReference>
<dbReference type="PDB" id="4W2G">
    <property type="method" value="X-ray"/>
    <property type="resolution" value="2.55 A"/>
    <property type="chains" value="B8/D8=1-65"/>
</dbReference>
<dbReference type="PDB" id="4W2H">
    <property type="method" value="X-ray"/>
    <property type="resolution" value="2.70 A"/>
    <property type="chains" value="B8/D8=1-65"/>
</dbReference>
<dbReference type="PDB" id="4W2I">
    <property type="method" value="X-ray"/>
    <property type="resolution" value="2.70 A"/>
    <property type="chains" value="B8/D8=1-65"/>
</dbReference>
<dbReference type="PDB" id="4W4G">
    <property type="method" value="X-ray"/>
    <property type="resolution" value="3.30 A"/>
    <property type="chains" value="R8/Y8=1-65"/>
</dbReference>
<dbReference type="PDB" id="4WPO">
    <property type="method" value="X-ray"/>
    <property type="resolution" value="2.80 A"/>
    <property type="chains" value="A8/C8=1-65"/>
</dbReference>
<dbReference type="PDB" id="4WQ1">
    <property type="method" value="X-ray"/>
    <property type="resolution" value="3.10 A"/>
    <property type="chains" value="M5=2-62, Q8=1-65"/>
</dbReference>
<dbReference type="PDB" id="4WQF">
    <property type="method" value="X-ray"/>
    <property type="resolution" value="2.80 A"/>
    <property type="chains" value="A8/C8=1-65"/>
</dbReference>
<dbReference type="PDB" id="4WQR">
    <property type="method" value="X-ray"/>
    <property type="resolution" value="3.15 A"/>
    <property type="chains" value="M5/Q8=1-65"/>
</dbReference>
<dbReference type="PDB" id="4WQU">
    <property type="method" value="X-ray"/>
    <property type="resolution" value="2.80 A"/>
    <property type="chains" value="A8/C8=1-65"/>
</dbReference>
<dbReference type="PDB" id="4WQY">
    <property type="method" value="X-ray"/>
    <property type="resolution" value="2.80 A"/>
    <property type="chains" value="A8/C8=1-65"/>
</dbReference>
<dbReference type="PDB" id="4WR6">
    <property type="method" value="X-ray"/>
    <property type="resolution" value="3.05 A"/>
    <property type="chains" value="M5/Q8=1-65"/>
</dbReference>
<dbReference type="PDB" id="4WRA">
    <property type="method" value="X-ray"/>
    <property type="resolution" value="3.05 A"/>
    <property type="chains" value="M5/Q8=1-65"/>
</dbReference>
<dbReference type="PDB" id="4WRO">
    <property type="method" value="X-ray"/>
    <property type="resolution" value="3.05 A"/>
    <property type="chains" value="Q8=1-65"/>
</dbReference>
<dbReference type="PDB" id="4WSD">
    <property type="method" value="X-ray"/>
    <property type="resolution" value="2.95 A"/>
    <property type="chains" value="M5/Q8=1-65"/>
</dbReference>
<dbReference type="PDB" id="4WSM">
    <property type="method" value="X-ray"/>
    <property type="resolution" value="3.30 A"/>
    <property type="chains" value="M5/Q8=1-65"/>
</dbReference>
<dbReference type="PDB" id="4WT1">
    <property type="method" value="X-ray"/>
    <property type="resolution" value="3.05 A"/>
    <property type="chains" value="M5/Q8=1-65"/>
</dbReference>
<dbReference type="PDB" id="4WT8">
    <property type="method" value="X-ray"/>
    <property type="resolution" value="3.40 A"/>
    <property type="chains" value="C9/D9=2-64"/>
</dbReference>
<dbReference type="PDB" id="4WU1">
    <property type="method" value="X-ray"/>
    <property type="resolution" value="3.20 A"/>
    <property type="chains" value="M5/Q8=1-65"/>
</dbReference>
<dbReference type="PDB" id="4WZD">
    <property type="method" value="X-ray"/>
    <property type="resolution" value="3.10 A"/>
    <property type="chains" value="M5/Q8=1-65"/>
</dbReference>
<dbReference type="PDB" id="4WZO">
    <property type="method" value="X-ray"/>
    <property type="resolution" value="3.30 A"/>
    <property type="chains" value="M5/Q8=1-65"/>
</dbReference>
<dbReference type="PDB" id="4Y4O">
    <property type="method" value="X-ray"/>
    <property type="resolution" value="2.30 A"/>
    <property type="chains" value="18/28=1-65"/>
</dbReference>
<dbReference type="PDB" id="4Y4P">
    <property type="method" value="X-ray"/>
    <property type="resolution" value="2.50 A"/>
    <property type="chains" value="18/28=1-65"/>
</dbReference>
<dbReference type="PDB" id="4YPB">
    <property type="method" value="X-ray"/>
    <property type="resolution" value="3.40 A"/>
    <property type="chains" value="R8/Y8=1-65"/>
</dbReference>
<dbReference type="PDB" id="4YZV">
    <property type="method" value="X-ray"/>
    <property type="resolution" value="3.10 A"/>
    <property type="chains" value="R8/Y8=1-65"/>
</dbReference>
<dbReference type="PDB" id="4Z3S">
    <property type="method" value="X-ray"/>
    <property type="resolution" value="2.65 A"/>
    <property type="chains" value="18/28=1-65"/>
</dbReference>
<dbReference type="PDB" id="4Z8C">
    <property type="method" value="X-ray"/>
    <property type="resolution" value="2.90 A"/>
    <property type="chains" value="18/28=1-65"/>
</dbReference>
<dbReference type="PDB" id="4ZER">
    <property type="method" value="X-ray"/>
    <property type="resolution" value="3.10 A"/>
    <property type="chains" value="18/28=2-65"/>
</dbReference>
<dbReference type="PDB" id="4ZSN">
    <property type="method" value="X-ray"/>
    <property type="resolution" value="3.60 A"/>
    <property type="chains" value="R8/Y8=1-65"/>
</dbReference>
<dbReference type="PDB" id="5A9Z">
    <property type="method" value="EM"/>
    <property type="resolution" value="4.70 A"/>
    <property type="chains" value="Ae=1-64"/>
</dbReference>
<dbReference type="PDB" id="5AA0">
    <property type="method" value="EM"/>
    <property type="resolution" value="5.00 A"/>
    <property type="chains" value="Ae=1-64"/>
</dbReference>
<dbReference type="PDB" id="5CZP">
    <property type="method" value="X-ray"/>
    <property type="resolution" value="3.30 A"/>
    <property type="chains" value="R8/Y8=1-65"/>
</dbReference>
<dbReference type="PDB" id="5D8B">
    <property type="method" value="X-ray"/>
    <property type="resolution" value="3.63 A"/>
    <property type="chains" value="BA/XB=1-65"/>
</dbReference>
<dbReference type="PDB" id="5DFE">
    <property type="method" value="X-ray"/>
    <property type="resolution" value="3.10 A"/>
    <property type="chains" value="R8/Y8=1-65"/>
</dbReference>
<dbReference type="PDB" id="5DOX">
    <property type="method" value="X-ray"/>
    <property type="resolution" value="3.10 A"/>
    <property type="chains" value="18/28=1-65"/>
</dbReference>
<dbReference type="PDB" id="5DOY">
    <property type="method" value="X-ray"/>
    <property type="resolution" value="2.60 A"/>
    <property type="chains" value="18/28=1-65"/>
</dbReference>
<dbReference type="PDB" id="5E7K">
    <property type="method" value="X-ray"/>
    <property type="resolution" value="3.20 A"/>
    <property type="chains" value="M5/Q8=1-65"/>
</dbReference>
<dbReference type="PDB" id="5E81">
    <property type="method" value="X-ray"/>
    <property type="resolution" value="2.95 A"/>
    <property type="chains" value="M5/Q8=1-65"/>
</dbReference>
<dbReference type="PDB" id="5EL4">
    <property type="method" value="X-ray"/>
    <property type="resolution" value="3.15 A"/>
    <property type="chains" value="M5/Q8=1-65"/>
</dbReference>
<dbReference type="PDB" id="5EL5">
    <property type="method" value="X-ray"/>
    <property type="resolution" value="3.15 A"/>
    <property type="chains" value="M5/Q8=1-65"/>
</dbReference>
<dbReference type="PDB" id="5EL6">
    <property type="method" value="X-ray"/>
    <property type="resolution" value="3.10 A"/>
    <property type="chains" value="M5/Q8=1-65"/>
</dbReference>
<dbReference type="PDB" id="5EL7">
    <property type="method" value="X-ray"/>
    <property type="resolution" value="3.15 A"/>
    <property type="chains" value="M5/Q8=1-65"/>
</dbReference>
<dbReference type="PDB" id="5F8K">
    <property type="method" value="X-ray"/>
    <property type="resolution" value="2.80 A"/>
    <property type="chains" value="18/28=2-65"/>
</dbReference>
<dbReference type="PDB" id="5FDU">
    <property type="method" value="X-ray"/>
    <property type="resolution" value="2.90 A"/>
    <property type="chains" value="18/28=2-65"/>
</dbReference>
<dbReference type="PDB" id="5FDV">
    <property type="method" value="X-ray"/>
    <property type="resolution" value="2.80 A"/>
    <property type="chains" value="18/28=2-65"/>
</dbReference>
<dbReference type="PDB" id="5HAU">
    <property type="method" value="X-ray"/>
    <property type="resolution" value="3.00 A"/>
    <property type="chains" value="16/26=1-65"/>
</dbReference>
<dbReference type="PDB" id="5HCP">
    <property type="method" value="X-ray"/>
    <property type="resolution" value="2.89 A"/>
    <property type="chains" value="18/28=1-65"/>
</dbReference>
<dbReference type="PDB" id="5HCQ">
    <property type="method" value="X-ray"/>
    <property type="resolution" value="2.80 A"/>
    <property type="chains" value="18/28=1-65"/>
</dbReference>
<dbReference type="PDB" id="5HCR">
    <property type="method" value="X-ray"/>
    <property type="resolution" value="2.80 A"/>
    <property type="chains" value="18/28=1-65"/>
</dbReference>
<dbReference type="PDB" id="5HD1">
    <property type="method" value="X-ray"/>
    <property type="resolution" value="2.70 A"/>
    <property type="chains" value="18/28=1-65"/>
</dbReference>
<dbReference type="PDB" id="5IB7">
    <property type="method" value="X-ray"/>
    <property type="resolution" value="2.99 A"/>
    <property type="chains" value="M5/Q8=1-65"/>
</dbReference>
<dbReference type="PDB" id="5IB8">
    <property type="method" value="X-ray"/>
    <property type="resolution" value="3.13 A"/>
    <property type="chains" value="M5/Q8=1-65"/>
</dbReference>
<dbReference type="PDB" id="5IBB">
    <property type="method" value="X-ray"/>
    <property type="resolution" value="2.96 A"/>
    <property type="chains" value="M5/Q8=1-65"/>
</dbReference>
<dbReference type="PDB" id="5IMQ">
    <property type="method" value="EM"/>
    <property type="resolution" value="3.80 A"/>
    <property type="chains" value="z=1-65"/>
</dbReference>
<dbReference type="PDB" id="5IMR">
    <property type="method" value="EM"/>
    <property type="chains" value="z=1-65"/>
</dbReference>
<dbReference type="PDB" id="5J30">
    <property type="method" value="X-ray"/>
    <property type="resolution" value="3.20 A"/>
    <property type="chains" value="R8/Y8=1-65"/>
</dbReference>
<dbReference type="PDB" id="5J3C">
    <property type="method" value="X-ray"/>
    <property type="resolution" value="3.04 A"/>
    <property type="chains" value="R8/Y8=1-65"/>
</dbReference>
<dbReference type="PDB" id="5J4B">
    <property type="method" value="X-ray"/>
    <property type="resolution" value="2.60 A"/>
    <property type="chains" value="18/28=1-65"/>
</dbReference>
<dbReference type="PDB" id="5J4C">
    <property type="method" value="X-ray"/>
    <property type="resolution" value="2.80 A"/>
    <property type="chains" value="18/28=1-65"/>
</dbReference>
<dbReference type="PDB" id="5J8B">
    <property type="method" value="X-ray"/>
    <property type="resolution" value="2.60 A"/>
    <property type="chains" value="8=1-65"/>
</dbReference>
<dbReference type="PDB" id="5NDJ">
    <property type="method" value="X-ray"/>
    <property type="resolution" value="3.15 A"/>
    <property type="chains" value="M5/Q8=1-65"/>
</dbReference>
<dbReference type="PDB" id="5NDK">
    <property type="method" value="X-ray"/>
    <property type="resolution" value="2.95 A"/>
    <property type="chains" value="M5/Q8=1-65"/>
</dbReference>
<dbReference type="PDB" id="5OT7">
    <property type="method" value="EM"/>
    <property type="resolution" value="3.80 A"/>
    <property type="chains" value="d=2-65"/>
</dbReference>
<dbReference type="PDB" id="5UQ7">
    <property type="method" value="EM"/>
    <property type="resolution" value="3.50 A"/>
    <property type="chains" value="8=2-65"/>
</dbReference>
<dbReference type="PDB" id="5UQ8">
    <property type="method" value="EM"/>
    <property type="resolution" value="3.20 A"/>
    <property type="chains" value="8=2-65"/>
</dbReference>
<dbReference type="PDB" id="5VP2">
    <property type="method" value="X-ray"/>
    <property type="resolution" value="2.80 A"/>
    <property type="chains" value="18/28=1-65"/>
</dbReference>
<dbReference type="PDB" id="5VPO">
    <property type="method" value="X-ray"/>
    <property type="resolution" value="3.34 A"/>
    <property type="chains" value="R8/Y8=1-65"/>
</dbReference>
<dbReference type="PDB" id="5VPP">
    <property type="method" value="X-ray"/>
    <property type="resolution" value="3.90 A"/>
    <property type="chains" value="R8/Y8=1-65"/>
</dbReference>
<dbReference type="PDB" id="5W4K">
    <property type="method" value="X-ray"/>
    <property type="resolution" value="2.70 A"/>
    <property type="chains" value="18/28=1-65"/>
</dbReference>
<dbReference type="PDB" id="5WIS">
    <property type="method" value="X-ray"/>
    <property type="resolution" value="2.70 A"/>
    <property type="chains" value="18/28=1-65"/>
</dbReference>
<dbReference type="PDB" id="5WIT">
    <property type="method" value="X-ray"/>
    <property type="resolution" value="2.60 A"/>
    <property type="chains" value="18/28=1-65"/>
</dbReference>
<dbReference type="PDB" id="5ZLU">
    <property type="method" value="EM"/>
    <property type="resolution" value="3.60 A"/>
    <property type="chains" value="AA=1-65"/>
</dbReference>
<dbReference type="PDB" id="6BUW">
    <property type="method" value="X-ray"/>
    <property type="resolution" value="3.50 A"/>
    <property type="chains" value="R8/Y8=1-65"/>
</dbReference>
<dbReference type="PDB" id="6BZ6">
    <property type="method" value="X-ray"/>
    <property type="resolution" value="3.18 A"/>
    <property type="chains" value="R8/Y8=1-65"/>
</dbReference>
<dbReference type="PDB" id="6BZ7">
    <property type="method" value="X-ray"/>
    <property type="resolution" value="3.68 A"/>
    <property type="chains" value="R8/Y8=1-65"/>
</dbReference>
<dbReference type="PDB" id="6BZ8">
    <property type="method" value="X-ray"/>
    <property type="resolution" value="3.74 A"/>
    <property type="chains" value="R8/Y8=1-65"/>
</dbReference>
<dbReference type="PDB" id="6C5L">
    <property type="method" value="X-ray"/>
    <property type="resolution" value="3.20 A"/>
    <property type="chains" value="B8/D8=1-65"/>
</dbReference>
<dbReference type="PDB" id="6CAE">
    <property type="method" value="X-ray"/>
    <property type="resolution" value="2.60 A"/>
    <property type="chains" value="18/28=1-65"/>
</dbReference>
<dbReference type="PDB" id="6CFJ">
    <property type="method" value="X-ray"/>
    <property type="resolution" value="2.80 A"/>
    <property type="chains" value="18/28=1-65"/>
</dbReference>
<dbReference type="PDB" id="6CFK">
    <property type="method" value="X-ray"/>
    <property type="resolution" value="2.70 A"/>
    <property type="chains" value="18/28=1-65"/>
</dbReference>
<dbReference type="PDB" id="6CFL">
    <property type="method" value="X-ray"/>
    <property type="resolution" value="2.60 A"/>
    <property type="chains" value="18/28=1-65"/>
</dbReference>
<dbReference type="PDB" id="6CZR">
    <property type="method" value="X-ray"/>
    <property type="resolution" value="3.14 A"/>
    <property type="chains" value="18/28=2-65"/>
</dbReference>
<dbReference type="PDB" id="6FKR">
    <property type="method" value="X-ray"/>
    <property type="resolution" value="3.20 A"/>
    <property type="chains" value="18/28=2-65"/>
</dbReference>
<dbReference type="PDB" id="6GSJ">
    <property type="method" value="X-ray"/>
    <property type="resolution" value="2.96 A"/>
    <property type="chains" value="M5/Q8=1-65"/>
</dbReference>
<dbReference type="PDB" id="6GSK">
    <property type="method" value="X-ray"/>
    <property type="resolution" value="3.36 A"/>
    <property type="chains" value="M5/Q8=1-65"/>
</dbReference>
<dbReference type="PDB" id="6GSL">
    <property type="method" value="X-ray"/>
    <property type="resolution" value="3.16 A"/>
    <property type="chains" value="M5/Q8=1-65"/>
</dbReference>
<dbReference type="PDB" id="6GZQ">
    <property type="method" value="EM"/>
    <property type="resolution" value="3.28 A"/>
    <property type="chains" value="d1=2-62"/>
</dbReference>
<dbReference type="PDB" id="6GZX">
    <property type="method" value="EM"/>
    <property type="resolution" value="4.57 A"/>
    <property type="chains" value="d1/d2=2-62"/>
</dbReference>
<dbReference type="PDB" id="6GZZ">
    <property type="method" value="EM"/>
    <property type="resolution" value="4.13 A"/>
    <property type="chains" value="d1/d2=2-62"/>
</dbReference>
<dbReference type="PDB" id="6N9E">
    <property type="method" value="X-ray"/>
    <property type="resolution" value="3.70 A"/>
    <property type="chains" value="18/28=1-65"/>
</dbReference>
<dbReference type="PDB" id="6N9F">
    <property type="method" value="X-ray"/>
    <property type="resolution" value="3.70 A"/>
    <property type="chains" value="18/28=1-65"/>
</dbReference>
<dbReference type="PDB" id="6ND5">
    <property type="method" value="X-ray"/>
    <property type="resolution" value="2.60 A"/>
    <property type="chains" value="18/28=1-65"/>
</dbReference>
<dbReference type="PDB" id="6ND6">
    <property type="method" value="X-ray"/>
    <property type="resolution" value="2.85 A"/>
    <property type="chains" value="18/28=1-65"/>
</dbReference>
<dbReference type="PDB" id="6NDK">
    <property type="method" value="X-ray"/>
    <property type="resolution" value="3.64 A"/>
    <property type="chains" value="R8/Y8=1-65"/>
</dbReference>
<dbReference type="PDB" id="6NSH">
    <property type="method" value="X-ray"/>
    <property type="resolution" value="3.40 A"/>
    <property type="chains" value="R8/Y8=1-65"/>
</dbReference>
<dbReference type="PDB" id="6NTA">
    <property type="method" value="X-ray"/>
    <property type="resolution" value="3.10 A"/>
    <property type="chains" value="R8/Y8=1-65"/>
</dbReference>
<dbReference type="PDB" id="6NUO">
    <property type="method" value="X-ray"/>
    <property type="resolution" value="3.20 A"/>
    <property type="chains" value="R8/Y8=1-65"/>
</dbReference>
<dbReference type="PDB" id="6NWY">
    <property type="method" value="X-ray"/>
    <property type="resolution" value="3.50 A"/>
    <property type="chains" value="R8/Y8=1-65"/>
</dbReference>
<dbReference type="PDB" id="6O3M">
    <property type="method" value="X-ray"/>
    <property type="resolution" value="3.97 A"/>
    <property type="chains" value="R8/Y8=1-65"/>
</dbReference>
<dbReference type="PDB" id="6O97">
    <property type="method" value="X-ray"/>
    <property type="resolution" value="2.75 A"/>
    <property type="chains" value="18/28=1-65"/>
</dbReference>
<dbReference type="PDB" id="6OF1">
    <property type="method" value="X-ray"/>
    <property type="resolution" value="2.80 A"/>
    <property type="chains" value="18/28=1-65"/>
</dbReference>
<dbReference type="PDB" id="6OF6">
    <property type="method" value="X-ray"/>
    <property type="resolution" value="3.20 A"/>
    <property type="chains" value="R8/Y8=1-65"/>
</dbReference>
<dbReference type="PDB" id="6OJ2">
    <property type="method" value="X-ray"/>
    <property type="resolution" value="3.20 A"/>
    <property type="chains" value="R8/Y8=1-65"/>
</dbReference>
<dbReference type="PDB" id="6OPE">
    <property type="method" value="X-ray"/>
    <property type="resolution" value="3.10 A"/>
    <property type="chains" value="R8/Y8=1-65"/>
</dbReference>
<dbReference type="PDB" id="6ORD">
    <property type="method" value="X-ray"/>
    <property type="resolution" value="3.10 A"/>
    <property type="chains" value="R8/Y8=1-65"/>
</dbReference>
<dbReference type="PDB" id="6OSI">
    <property type="method" value="X-ray"/>
    <property type="resolution" value="4.14 A"/>
    <property type="chains" value="R8/Y8=1-65"/>
</dbReference>
<dbReference type="PDB" id="6OTR">
    <property type="method" value="X-ray"/>
    <property type="resolution" value="3.12 A"/>
    <property type="chains" value="R8/Y8=1-65"/>
</dbReference>
<dbReference type="PDB" id="6OXA">
    <property type="method" value="X-ray"/>
    <property type="resolution" value="3.25 A"/>
    <property type="chains" value="R8/Y8=1-65"/>
</dbReference>
<dbReference type="PDB" id="6OXI">
    <property type="method" value="X-ray"/>
    <property type="resolution" value="3.50 A"/>
    <property type="chains" value="R8/Y8=1-65"/>
</dbReference>
<dbReference type="PDB" id="6Q95">
    <property type="method" value="EM"/>
    <property type="resolution" value="3.70 A"/>
    <property type="chains" value="e=2-65"/>
</dbReference>
<dbReference type="PDB" id="6QNQ">
    <property type="method" value="X-ray"/>
    <property type="resolution" value="3.50 A"/>
    <property type="chains" value="M5/Q8=1-65"/>
</dbReference>
<dbReference type="PDB" id="6QNR">
    <property type="method" value="X-ray"/>
    <property type="resolution" value="3.10 A"/>
    <property type="chains" value="M5/Q8=1-65"/>
</dbReference>
<dbReference type="PDB" id="6UCQ">
    <property type="method" value="X-ray"/>
    <property type="resolution" value="3.50 A"/>
    <property type="chains" value="18/28=1-65"/>
</dbReference>
<dbReference type="PDB" id="6UO1">
    <property type="method" value="X-ray"/>
    <property type="resolution" value="2.95 A"/>
    <property type="chains" value="18/28=1-65"/>
</dbReference>
<dbReference type="PDB" id="6XHV">
    <property type="method" value="X-ray"/>
    <property type="resolution" value="2.40 A"/>
    <property type="chains" value="18/28=1-65"/>
</dbReference>
<dbReference type="PDB" id="6XHW">
    <property type="method" value="X-ray"/>
    <property type="resolution" value="2.50 A"/>
    <property type="chains" value="18/28=1-65"/>
</dbReference>
<dbReference type="PDB" id="6XHX">
    <property type="method" value="X-ray"/>
    <property type="resolution" value="2.55 A"/>
    <property type="chains" value="18/28=1-65"/>
</dbReference>
<dbReference type="PDB" id="6XHY">
    <property type="method" value="X-ray"/>
    <property type="resolution" value="2.60 A"/>
    <property type="chains" value="18/28=1-65"/>
</dbReference>
<dbReference type="PDB" id="6XQD">
    <property type="method" value="X-ray"/>
    <property type="resolution" value="2.80 A"/>
    <property type="chains" value="18/28=1-65"/>
</dbReference>
<dbReference type="PDB" id="6XQE">
    <property type="method" value="X-ray"/>
    <property type="resolution" value="3.00 A"/>
    <property type="chains" value="18/28=1-65"/>
</dbReference>
<dbReference type="PDB" id="7AZO">
    <property type="method" value="X-ray"/>
    <property type="resolution" value="3.30 A"/>
    <property type="chains" value="L35A/L35B=1-65"/>
</dbReference>
<dbReference type="PDB" id="7AZS">
    <property type="method" value="X-ray"/>
    <property type="resolution" value="3.10 A"/>
    <property type="chains" value="L35A/L35B=1-65"/>
</dbReference>
<dbReference type="PDB" id="7JQL">
    <property type="method" value="X-ray"/>
    <property type="resolution" value="3.00 A"/>
    <property type="chains" value="18/28=1-65"/>
</dbReference>
<dbReference type="PDB" id="7JQM">
    <property type="method" value="X-ray"/>
    <property type="resolution" value="3.05 A"/>
    <property type="chains" value="18/28=1-65"/>
</dbReference>
<dbReference type="PDB" id="7LH5">
    <property type="method" value="X-ray"/>
    <property type="resolution" value="3.27 A"/>
    <property type="chains" value="B8/D8=1-65"/>
</dbReference>
<dbReference type="PDB" id="7MD7">
    <property type="method" value="X-ray"/>
    <property type="resolution" value="2.80 A"/>
    <property type="chains" value="18/28=1-65"/>
</dbReference>
<dbReference type="PDB" id="7RQ8">
    <property type="method" value="X-ray"/>
    <property type="resolution" value="2.50 A"/>
    <property type="chains" value="18/28=1-65"/>
</dbReference>
<dbReference type="PDB" id="7RQ9">
    <property type="method" value="X-ray"/>
    <property type="resolution" value="2.60 A"/>
    <property type="chains" value="18/28=1-65"/>
</dbReference>
<dbReference type="PDB" id="7RQA">
    <property type="method" value="X-ray"/>
    <property type="resolution" value="2.40 A"/>
    <property type="chains" value="18/28=1-65"/>
</dbReference>
<dbReference type="PDB" id="7RQB">
    <property type="method" value="X-ray"/>
    <property type="resolution" value="2.45 A"/>
    <property type="chains" value="18/28=1-65"/>
</dbReference>
<dbReference type="PDB" id="7RQC">
    <property type="method" value="X-ray"/>
    <property type="resolution" value="2.50 A"/>
    <property type="chains" value="18/28=1-65"/>
</dbReference>
<dbReference type="PDB" id="7RQD">
    <property type="method" value="X-ray"/>
    <property type="resolution" value="2.50 A"/>
    <property type="chains" value="18/28=1-65"/>
</dbReference>
<dbReference type="PDB" id="7RQE">
    <property type="method" value="X-ray"/>
    <property type="resolution" value="2.40 A"/>
    <property type="chains" value="18/28=1-65"/>
</dbReference>
<dbReference type="PDB" id="7U2H">
    <property type="method" value="X-ray"/>
    <property type="resolution" value="2.55 A"/>
    <property type="chains" value="18/28=1-65"/>
</dbReference>
<dbReference type="PDB" id="7U2I">
    <property type="method" value="X-ray"/>
    <property type="resolution" value="2.55 A"/>
    <property type="chains" value="18/28=1-65"/>
</dbReference>
<dbReference type="PDB" id="7U2J">
    <property type="method" value="X-ray"/>
    <property type="resolution" value="2.55 A"/>
    <property type="chains" value="18/28=1-65"/>
</dbReference>
<dbReference type="PDB" id="8CVJ">
    <property type="method" value="X-ray"/>
    <property type="resolution" value="2.40 A"/>
    <property type="chains" value="18/28=1-65"/>
</dbReference>
<dbReference type="PDB" id="8CVK">
    <property type="method" value="X-ray"/>
    <property type="resolution" value="2.50 A"/>
    <property type="chains" value="18/28=1-65"/>
</dbReference>
<dbReference type="PDB" id="8CVL">
    <property type="method" value="X-ray"/>
    <property type="resolution" value="2.30 A"/>
    <property type="chains" value="18/28=1-65"/>
</dbReference>
<dbReference type="PDB" id="8EKB">
    <property type="method" value="X-ray"/>
    <property type="resolution" value="2.70 A"/>
    <property type="chains" value="18/28=1-65"/>
</dbReference>
<dbReference type="PDB" id="8EV6">
    <property type="method" value="X-ray"/>
    <property type="resolution" value="2.95 A"/>
    <property type="chains" value="18/28=1-65"/>
</dbReference>
<dbReference type="PDB" id="8EV7">
    <property type="method" value="X-ray"/>
    <property type="resolution" value="2.89 A"/>
    <property type="chains" value="18/28=1-65"/>
</dbReference>
<dbReference type="PDB" id="8FC1">
    <property type="method" value="X-ray"/>
    <property type="resolution" value="2.50 A"/>
    <property type="chains" value="18/28=1-65"/>
</dbReference>
<dbReference type="PDB" id="8FC2">
    <property type="method" value="X-ray"/>
    <property type="resolution" value="2.50 A"/>
    <property type="chains" value="18/28=1-65"/>
</dbReference>
<dbReference type="PDB" id="8FC3">
    <property type="method" value="X-ray"/>
    <property type="resolution" value="2.60 A"/>
    <property type="chains" value="18/28=1-65"/>
</dbReference>
<dbReference type="PDB" id="8FC4">
    <property type="method" value="X-ray"/>
    <property type="resolution" value="2.45 A"/>
    <property type="chains" value="18/28=1-65"/>
</dbReference>
<dbReference type="PDB" id="8FC5">
    <property type="method" value="X-ray"/>
    <property type="resolution" value="2.65 A"/>
    <property type="chains" value="18/28=1-65"/>
</dbReference>
<dbReference type="PDB" id="8FC6">
    <property type="method" value="X-ray"/>
    <property type="resolution" value="2.35 A"/>
    <property type="chains" value="18/28=1-65"/>
</dbReference>
<dbReference type="PDB" id="8FOM">
    <property type="method" value="X-ray"/>
    <property type="resolution" value="3.58 A"/>
    <property type="chains" value="R8/Y8=1-65"/>
</dbReference>
<dbReference type="PDB" id="8FON">
    <property type="method" value="X-ray"/>
    <property type="resolution" value="3.64 A"/>
    <property type="chains" value="R8/Y8=1-65"/>
</dbReference>
<dbReference type="PDB" id="8G29">
    <property type="method" value="X-ray"/>
    <property type="resolution" value="2.55 A"/>
    <property type="chains" value="18/28=1-65"/>
</dbReference>
<dbReference type="PDB" id="8G2A">
    <property type="method" value="X-ray"/>
    <property type="resolution" value="2.45 A"/>
    <property type="chains" value="18/28=1-65"/>
</dbReference>
<dbReference type="PDB" id="8G2B">
    <property type="method" value="X-ray"/>
    <property type="resolution" value="2.55 A"/>
    <property type="chains" value="18/28=1-65"/>
</dbReference>
<dbReference type="PDB" id="8G2C">
    <property type="method" value="X-ray"/>
    <property type="resolution" value="2.65 A"/>
    <property type="chains" value="18/28=1-65"/>
</dbReference>
<dbReference type="PDB" id="8G2D">
    <property type="method" value="X-ray"/>
    <property type="resolution" value="2.70 A"/>
    <property type="chains" value="18/28=1-65"/>
</dbReference>
<dbReference type="PDB" id="8T8B">
    <property type="method" value="X-ray"/>
    <property type="resolution" value="2.65 A"/>
    <property type="chains" value="18/28=1-65"/>
</dbReference>
<dbReference type="PDB" id="8T8C">
    <property type="method" value="X-ray"/>
    <property type="resolution" value="2.60 A"/>
    <property type="chains" value="18/28=1-65"/>
</dbReference>
<dbReference type="PDB" id="8UD6">
    <property type="method" value="X-ray"/>
    <property type="resolution" value="2.70 A"/>
    <property type="chains" value="18/28=1-65"/>
</dbReference>
<dbReference type="PDB" id="8UD7">
    <property type="method" value="X-ray"/>
    <property type="resolution" value="2.55 A"/>
    <property type="chains" value="18/28=1-65"/>
</dbReference>
<dbReference type="PDB" id="8UD8">
    <property type="method" value="X-ray"/>
    <property type="resolution" value="2.60 A"/>
    <property type="chains" value="18/28=1-65"/>
</dbReference>
<dbReference type="PDB" id="8UVR">
    <property type="method" value="X-ray"/>
    <property type="resolution" value="2.60 A"/>
    <property type="chains" value="18/28=1-65"/>
</dbReference>
<dbReference type="PDB" id="8UVS">
    <property type="method" value="X-ray"/>
    <property type="resolution" value="2.75 A"/>
    <property type="chains" value="18/28=1-65"/>
</dbReference>
<dbReference type="PDB" id="8VTU">
    <property type="method" value="X-ray"/>
    <property type="resolution" value="2.40 A"/>
    <property type="chains" value="18/28=1-65"/>
</dbReference>
<dbReference type="PDB" id="8VTV">
    <property type="method" value="X-ray"/>
    <property type="resolution" value="2.55 A"/>
    <property type="chains" value="18/28=1-65"/>
</dbReference>
<dbReference type="PDB" id="8VTW">
    <property type="method" value="X-ray"/>
    <property type="resolution" value="2.35 A"/>
    <property type="chains" value="18/28=1-65"/>
</dbReference>
<dbReference type="PDB" id="8VTX">
    <property type="method" value="X-ray"/>
    <property type="resolution" value="2.40 A"/>
    <property type="chains" value="18/28=1-65"/>
</dbReference>
<dbReference type="PDB" id="8VTY">
    <property type="method" value="X-ray"/>
    <property type="resolution" value="2.60 A"/>
    <property type="chains" value="18/28=1-65"/>
</dbReference>
<dbReference type="PDB" id="8WV1">
    <property type="method" value="X-ray"/>
    <property type="resolution" value="3.99 A"/>
    <property type="chains" value="3/8=1-65"/>
</dbReference>
<dbReference type="PDB" id="9B00">
    <property type="method" value="X-ray"/>
    <property type="resolution" value="2.80 A"/>
    <property type="chains" value="18/28=1-65"/>
</dbReference>
<dbReference type="PDB" id="9D0J">
    <property type="method" value="X-ray"/>
    <property type="resolution" value="2.50 A"/>
    <property type="chains" value="18/28=1-65"/>
</dbReference>
<dbReference type="PDB" id="9D7R">
    <property type="method" value="X-ray"/>
    <property type="resolution" value="2.70 A"/>
    <property type="chains" value="18/28=1-65"/>
</dbReference>
<dbReference type="PDB" id="9D7S">
    <property type="method" value="X-ray"/>
    <property type="resolution" value="2.85 A"/>
    <property type="chains" value="18/28=1-65"/>
</dbReference>
<dbReference type="PDB" id="9D7T">
    <property type="method" value="X-ray"/>
    <property type="resolution" value="2.70 A"/>
    <property type="chains" value="18/28=1-65"/>
</dbReference>
<dbReference type="PDB" id="9DFC">
    <property type="method" value="X-ray"/>
    <property type="resolution" value="2.50 A"/>
    <property type="chains" value="18/28=1-65"/>
</dbReference>
<dbReference type="PDB" id="9DFD">
    <property type="method" value="X-ray"/>
    <property type="resolution" value="2.60 A"/>
    <property type="chains" value="18/28=1-65"/>
</dbReference>
<dbReference type="PDB" id="9DFE">
    <property type="method" value="X-ray"/>
    <property type="resolution" value="2.60 A"/>
    <property type="chains" value="18/28=1-65"/>
</dbReference>
<dbReference type="PDBsum" id="1VVJ"/>
<dbReference type="PDBsum" id="1VY4"/>
<dbReference type="PDBsum" id="1VY5"/>
<dbReference type="PDBsum" id="1VY6"/>
<dbReference type="PDBsum" id="1VY7"/>
<dbReference type="PDBsum" id="4L47"/>
<dbReference type="PDBsum" id="4L71"/>
<dbReference type="PDBsum" id="4LEL"/>
<dbReference type="PDBsum" id="4LFZ"/>
<dbReference type="PDBsum" id="4LNT"/>
<dbReference type="PDBsum" id="4LSK"/>
<dbReference type="PDBsum" id="4LT8"/>
<dbReference type="PDBsum" id="4P6F"/>
<dbReference type="PDBsum" id="4P70"/>
<dbReference type="PDBsum" id="4TUA"/>
<dbReference type="PDBsum" id="4TUB"/>
<dbReference type="PDBsum" id="4TUC"/>
<dbReference type="PDBsum" id="4TUD"/>
<dbReference type="PDBsum" id="4TUE"/>
<dbReference type="PDBsum" id="4V4P"/>
<dbReference type="PDBsum" id="4V4X"/>
<dbReference type="PDBsum" id="4V4Y"/>
<dbReference type="PDBsum" id="4V4Z"/>
<dbReference type="PDBsum" id="4V51"/>
<dbReference type="PDBsum" id="4V5C"/>
<dbReference type="PDBsum" id="4V5D"/>
<dbReference type="PDBsum" id="4V5E"/>
<dbReference type="PDBsum" id="4V5F"/>
<dbReference type="PDBsum" id="4V5G"/>
<dbReference type="PDBsum" id="4V5J"/>
<dbReference type="PDBsum" id="4V5K"/>
<dbReference type="PDBsum" id="4V5L"/>
<dbReference type="PDBsum" id="4V5M"/>
<dbReference type="PDBsum" id="4V5N"/>
<dbReference type="PDBsum" id="4V5P"/>
<dbReference type="PDBsum" id="4V5Q"/>
<dbReference type="PDBsum" id="4V5R"/>
<dbReference type="PDBsum" id="4V5S"/>
<dbReference type="PDBsum" id="4V68"/>
<dbReference type="PDBsum" id="4V6A"/>
<dbReference type="PDBsum" id="4V6F"/>
<dbReference type="PDBsum" id="4V6G"/>
<dbReference type="PDBsum" id="4V7J"/>
<dbReference type="PDBsum" id="4V7K"/>
<dbReference type="PDBsum" id="4V7L"/>
<dbReference type="PDBsum" id="4V7M"/>
<dbReference type="PDBsum" id="4V7W"/>
<dbReference type="PDBsum" id="4V7X"/>
<dbReference type="PDBsum" id="4V7Y"/>
<dbReference type="PDBsum" id="4V7Z"/>
<dbReference type="PDBsum" id="4V87"/>
<dbReference type="PDBsum" id="4V8A"/>
<dbReference type="PDBsum" id="4V8B"/>
<dbReference type="PDBsum" id="4V8C"/>
<dbReference type="PDBsum" id="4V8D"/>
<dbReference type="PDBsum" id="4V8E"/>
<dbReference type="PDBsum" id="4V8F"/>
<dbReference type="PDBsum" id="4V8G"/>
<dbReference type="PDBsum" id="4V8H"/>
<dbReference type="PDBsum" id="4V8I"/>
<dbReference type="PDBsum" id="4V8J"/>
<dbReference type="PDBsum" id="4V8N"/>
<dbReference type="PDBsum" id="4V8O"/>
<dbReference type="PDBsum" id="4V8Q"/>
<dbReference type="PDBsum" id="4V8U"/>
<dbReference type="PDBsum" id="4V8X"/>
<dbReference type="PDBsum" id="4V90"/>
<dbReference type="PDBsum" id="4V95"/>
<dbReference type="PDBsum" id="4V97"/>
<dbReference type="PDBsum" id="4V9A"/>
<dbReference type="PDBsum" id="4V9B"/>
<dbReference type="PDBsum" id="4V9H"/>
<dbReference type="PDBsum" id="4V9I"/>
<dbReference type="PDBsum" id="4V9R"/>
<dbReference type="PDBsum" id="4V9S"/>
<dbReference type="PDBsum" id="4W2E"/>
<dbReference type="PDBsum" id="4W2F"/>
<dbReference type="PDBsum" id="4W2G"/>
<dbReference type="PDBsum" id="4W2H"/>
<dbReference type="PDBsum" id="4W2I"/>
<dbReference type="PDBsum" id="4W4G"/>
<dbReference type="PDBsum" id="4WPO"/>
<dbReference type="PDBsum" id="4WQ1"/>
<dbReference type="PDBsum" id="4WQF"/>
<dbReference type="PDBsum" id="4WQR"/>
<dbReference type="PDBsum" id="4WQU"/>
<dbReference type="PDBsum" id="4WQY"/>
<dbReference type="PDBsum" id="4WR6"/>
<dbReference type="PDBsum" id="4WRA"/>
<dbReference type="PDBsum" id="4WRO"/>
<dbReference type="PDBsum" id="4WSD"/>
<dbReference type="PDBsum" id="4WSM"/>
<dbReference type="PDBsum" id="4WT1"/>
<dbReference type="PDBsum" id="4WT8"/>
<dbReference type="PDBsum" id="4WU1"/>
<dbReference type="PDBsum" id="4WZD"/>
<dbReference type="PDBsum" id="4WZO"/>
<dbReference type="PDBsum" id="4Y4O"/>
<dbReference type="PDBsum" id="4Y4P"/>
<dbReference type="PDBsum" id="4YPB"/>
<dbReference type="PDBsum" id="4YZV"/>
<dbReference type="PDBsum" id="4Z3S"/>
<dbReference type="PDBsum" id="4Z8C"/>
<dbReference type="PDBsum" id="4ZER"/>
<dbReference type="PDBsum" id="4ZSN"/>
<dbReference type="PDBsum" id="5A9Z"/>
<dbReference type="PDBsum" id="5AA0"/>
<dbReference type="PDBsum" id="5CZP"/>
<dbReference type="PDBsum" id="5D8B"/>
<dbReference type="PDBsum" id="5DFE"/>
<dbReference type="PDBsum" id="5DOX"/>
<dbReference type="PDBsum" id="5DOY"/>
<dbReference type="PDBsum" id="5E7K"/>
<dbReference type="PDBsum" id="5E81"/>
<dbReference type="PDBsum" id="5EL4"/>
<dbReference type="PDBsum" id="5EL5"/>
<dbReference type="PDBsum" id="5EL6"/>
<dbReference type="PDBsum" id="5EL7"/>
<dbReference type="PDBsum" id="5F8K"/>
<dbReference type="PDBsum" id="5FDU"/>
<dbReference type="PDBsum" id="5FDV"/>
<dbReference type="PDBsum" id="5HAU"/>
<dbReference type="PDBsum" id="5HCP"/>
<dbReference type="PDBsum" id="5HCQ"/>
<dbReference type="PDBsum" id="5HCR"/>
<dbReference type="PDBsum" id="5HD1"/>
<dbReference type="PDBsum" id="5IB7"/>
<dbReference type="PDBsum" id="5IB8"/>
<dbReference type="PDBsum" id="5IBB"/>
<dbReference type="PDBsum" id="5IMQ"/>
<dbReference type="PDBsum" id="5IMR"/>
<dbReference type="PDBsum" id="5J30"/>
<dbReference type="PDBsum" id="5J3C"/>
<dbReference type="PDBsum" id="5J4B"/>
<dbReference type="PDBsum" id="5J4C"/>
<dbReference type="PDBsum" id="5J8B"/>
<dbReference type="PDBsum" id="5NDJ"/>
<dbReference type="PDBsum" id="5NDK"/>
<dbReference type="PDBsum" id="5OT7"/>
<dbReference type="PDBsum" id="5UQ7"/>
<dbReference type="PDBsum" id="5UQ8"/>
<dbReference type="PDBsum" id="5VP2"/>
<dbReference type="PDBsum" id="5VPO"/>
<dbReference type="PDBsum" id="5VPP"/>
<dbReference type="PDBsum" id="5W4K"/>
<dbReference type="PDBsum" id="5WIS"/>
<dbReference type="PDBsum" id="5WIT"/>
<dbReference type="PDBsum" id="5ZLU"/>
<dbReference type="PDBsum" id="6BUW"/>
<dbReference type="PDBsum" id="6BZ6"/>
<dbReference type="PDBsum" id="6BZ7"/>
<dbReference type="PDBsum" id="6BZ8"/>
<dbReference type="PDBsum" id="6C5L"/>
<dbReference type="PDBsum" id="6CAE"/>
<dbReference type="PDBsum" id="6CFJ"/>
<dbReference type="PDBsum" id="6CFK"/>
<dbReference type="PDBsum" id="6CFL"/>
<dbReference type="PDBsum" id="6CZR"/>
<dbReference type="PDBsum" id="6FKR"/>
<dbReference type="PDBsum" id="6GSJ"/>
<dbReference type="PDBsum" id="6GSK"/>
<dbReference type="PDBsum" id="6GSL"/>
<dbReference type="PDBsum" id="6GZQ"/>
<dbReference type="PDBsum" id="6GZX"/>
<dbReference type="PDBsum" id="6GZZ"/>
<dbReference type="PDBsum" id="6N9E"/>
<dbReference type="PDBsum" id="6N9F"/>
<dbReference type="PDBsum" id="6ND5"/>
<dbReference type="PDBsum" id="6ND6"/>
<dbReference type="PDBsum" id="6NDK"/>
<dbReference type="PDBsum" id="6NSH"/>
<dbReference type="PDBsum" id="6NTA"/>
<dbReference type="PDBsum" id="6NUO"/>
<dbReference type="PDBsum" id="6NWY"/>
<dbReference type="PDBsum" id="6O3M"/>
<dbReference type="PDBsum" id="6O97"/>
<dbReference type="PDBsum" id="6OF1"/>
<dbReference type="PDBsum" id="6OF6"/>
<dbReference type="PDBsum" id="6OJ2"/>
<dbReference type="PDBsum" id="6OPE"/>
<dbReference type="PDBsum" id="6ORD"/>
<dbReference type="PDBsum" id="6OSI"/>
<dbReference type="PDBsum" id="6OTR"/>
<dbReference type="PDBsum" id="6OXA"/>
<dbReference type="PDBsum" id="6OXI"/>
<dbReference type="PDBsum" id="6Q95"/>
<dbReference type="PDBsum" id="6QNQ"/>
<dbReference type="PDBsum" id="6QNR"/>
<dbReference type="PDBsum" id="6UCQ"/>
<dbReference type="PDBsum" id="6UO1"/>
<dbReference type="PDBsum" id="6XHV"/>
<dbReference type="PDBsum" id="6XHW"/>
<dbReference type="PDBsum" id="6XHX"/>
<dbReference type="PDBsum" id="6XHY"/>
<dbReference type="PDBsum" id="6XQD"/>
<dbReference type="PDBsum" id="6XQE"/>
<dbReference type="PDBsum" id="7AZO"/>
<dbReference type="PDBsum" id="7AZS"/>
<dbReference type="PDBsum" id="7JQL"/>
<dbReference type="PDBsum" id="7JQM"/>
<dbReference type="PDBsum" id="7LH5"/>
<dbReference type="PDBsum" id="7MD7"/>
<dbReference type="PDBsum" id="7RQ8"/>
<dbReference type="PDBsum" id="7RQ9"/>
<dbReference type="PDBsum" id="7RQA"/>
<dbReference type="PDBsum" id="7RQB"/>
<dbReference type="PDBsum" id="7RQC"/>
<dbReference type="PDBsum" id="7RQD"/>
<dbReference type="PDBsum" id="7RQE"/>
<dbReference type="PDBsum" id="7U2H"/>
<dbReference type="PDBsum" id="7U2I"/>
<dbReference type="PDBsum" id="7U2J"/>
<dbReference type="PDBsum" id="8CVJ"/>
<dbReference type="PDBsum" id="8CVK"/>
<dbReference type="PDBsum" id="8CVL"/>
<dbReference type="PDBsum" id="8EKB"/>
<dbReference type="PDBsum" id="8EV6"/>
<dbReference type="PDBsum" id="8EV7"/>
<dbReference type="PDBsum" id="8FC1"/>
<dbReference type="PDBsum" id="8FC2"/>
<dbReference type="PDBsum" id="8FC3"/>
<dbReference type="PDBsum" id="8FC4"/>
<dbReference type="PDBsum" id="8FC5"/>
<dbReference type="PDBsum" id="8FC6"/>
<dbReference type="PDBsum" id="8FOM"/>
<dbReference type="PDBsum" id="8FON"/>
<dbReference type="PDBsum" id="8G29"/>
<dbReference type="PDBsum" id="8G2A"/>
<dbReference type="PDBsum" id="8G2B"/>
<dbReference type="PDBsum" id="8G2C"/>
<dbReference type="PDBsum" id="8G2D"/>
<dbReference type="PDBsum" id="8T8B"/>
<dbReference type="PDBsum" id="8T8C"/>
<dbReference type="PDBsum" id="8UD6"/>
<dbReference type="PDBsum" id="8UD7"/>
<dbReference type="PDBsum" id="8UD8"/>
<dbReference type="PDBsum" id="8UVR"/>
<dbReference type="PDBsum" id="8UVS"/>
<dbReference type="PDBsum" id="8VTU"/>
<dbReference type="PDBsum" id="8VTV"/>
<dbReference type="PDBsum" id="8VTW"/>
<dbReference type="PDBsum" id="8VTX"/>
<dbReference type="PDBsum" id="8VTY"/>
<dbReference type="PDBsum" id="8WV1"/>
<dbReference type="PDBsum" id="9B00"/>
<dbReference type="PDBsum" id="9D0J"/>
<dbReference type="PDBsum" id="9D7R"/>
<dbReference type="PDBsum" id="9D7S"/>
<dbReference type="PDBsum" id="9D7T"/>
<dbReference type="PDBsum" id="9DFC"/>
<dbReference type="PDBsum" id="9DFD"/>
<dbReference type="PDBsum" id="9DFE"/>
<dbReference type="EMDB" id="EMD-0101"/>
<dbReference type="EMDB" id="EMD-0104"/>
<dbReference type="EMDB" id="EMD-0105"/>
<dbReference type="EMDB" id="EMD-3852"/>
<dbReference type="EMDB" id="EMD-4475"/>
<dbReference type="EMDB" id="EMD-6934"/>
<dbReference type="EMDB" id="EMD-8596"/>
<dbReference type="EMDB" id="EMD-8597"/>
<dbReference type="SMR" id="Q5SKU1"/>
<dbReference type="IntAct" id="Q5SKU1">
    <property type="interactions" value="8"/>
</dbReference>
<dbReference type="EnsemblBacteria" id="BAD70375">
    <property type="protein sequence ID" value="BAD70375"/>
    <property type="gene ID" value="BAD70375"/>
</dbReference>
<dbReference type="GeneID" id="3169498"/>
<dbReference type="KEGG" id="ttj:TTHA0552"/>
<dbReference type="PATRIC" id="fig|300852.9.peg.551"/>
<dbReference type="eggNOG" id="COG0291">
    <property type="taxonomic scope" value="Bacteria"/>
</dbReference>
<dbReference type="HOGENOM" id="CLU_169643_2_2_0"/>
<dbReference type="PhylomeDB" id="Q5SKU1"/>
<dbReference type="Proteomes" id="UP000000532">
    <property type="component" value="Chromosome"/>
</dbReference>
<dbReference type="GO" id="GO:0022625">
    <property type="term" value="C:cytosolic large ribosomal subunit"/>
    <property type="evidence" value="ECO:0007669"/>
    <property type="project" value="TreeGrafter"/>
</dbReference>
<dbReference type="GO" id="GO:0003735">
    <property type="term" value="F:structural constituent of ribosome"/>
    <property type="evidence" value="ECO:0007669"/>
    <property type="project" value="InterPro"/>
</dbReference>
<dbReference type="GO" id="GO:0006412">
    <property type="term" value="P:translation"/>
    <property type="evidence" value="ECO:0007669"/>
    <property type="project" value="UniProtKB-UniRule"/>
</dbReference>
<dbReference type="FunFam" id="4.10.410.60:FF:000001">
    <property type="entry name" value="50S ribosomal protein L35"/>
    <property type="match status" value="1"/>
</dbReference>
<dbReference type="Gene3D" id="4.10.410.60">
    <property type="match status" value="1"/>
</dbReference>
<dbReference type="HAMAP" id="MF_00514">
    <property type="entry name" value="Ribosomal_bL35"/>
    <property type="match status" value="1"/>
</dbReference>
<dbReference type="InterPro" id="IPR001706">
    <property type="entry name" value="Ribosomal_bL35"/>
</dbReference>
<dbReference type="InterPro" id="IPR021137">
    <property type="entry name" value="Ribosomal_bL35-like"/>
</dbReference>
<dbReference type="InterPro" id="IPR018265">
    <property type="entry name" value="Ribosomal_bL35_CS"/>
</dbReference>
<dbReference type="InterPro" id="IPR037229">
    <property type="entry name" value="Ribosomal_bL35_sf"/>
</dbReference>
<dbReference type="NCBIfam" id="TIGR00001">
    <property type="entry name" value="rpmI_bact"/>
    <property type="match status" value="1"/>
</dbReference>
<dbReference type="PANTHER" id="PTHR33343">
    <property type="entry name" value="54S RIBOSOMAL PROTEIN BL35M"/>
    <property type="match status" value="1"/>
</dbReference>
<dbReference type="PANTHER" id="PTHR33343:SF1">
    <property type="entry name" value="LARGE RIBOSOMAL SUBUNIT PROTEIN BL35M"/>
    <property type="match status" value="1"/>
</dbReference>
<dbReference type="Pfam" id="PF01632">
    <property type="entry name" value="Ribosomal_L35p"/>
    <property type="match status" value="1"/>
</dbReference>
<dbReference type="PRINTS" id="PR00064">
    <property type="entry name" value="RIBOSOMALL35"/>
</dbReference>
<dbReference type="SUPFAM" id="SSF143034">
    <property type="entry name" value="L35p-like"/>
    <property type="match status" value="1"/>
</dbReference>
<dbReference type="PROSITE" id="PS00936">
    <property type="entry name" value="RIBOSOMAL_L35"/>
    <property type="match status" value="1"/>
</dbReference>